<evidence type="ECO:0000255" key="1">
    <source>
        <dbReference type="HAMAP-Rule" id="MF_00248"/>
    </source>
</evidence>
<feature type="chain" id="PRO_1000125422" description="ATP-dependent protease subunit HslV">
    <location>
        <begin position="1"/>
        <end position="184"/>
    </location>
</feature>
<feature type="active site" evidence="1">
    <location>
        <position position="12"/>
    </location>
</feature>
<feature type="binding site" evidence="1">
    <location>
        <position position="167"/>
    </location>
    <ligand>
        <name>Na(+)</name>
        <dbReference type="ChEBI" id="CHEBI:29101"/>
    </ligand>
</feature>
<feature type="binding site" evidence="1">
    <location>
        <position position="170"/>
    </location>
    <ligand>
        <name>Na(+)</name>
        <dbReference type="ChEBI" id="CHEBI:29101"/>
    </ligand>
</feature>
<feature type="binding site" evidence="1">
    <location>
        <position position="173"/>
    </location>
    <ligand>
        <name>Na(+)</name>
        <dbReference type="ChEBI" id="CHEBI:29101"/>
    </ligand>
</feature>
<gene>
    <name evidence="1" type="primary">hslV</name>
    <name type="ordered locus">WRi_011610</name>
</gene>
<comment type="function">
    <text evidence="1">Protease subunit of a proteasome-like degradation complex believed to be a general protein degrading machinery.</text>
</comment>
<comment type="catalytic activity">
    <reaction evidence="1">
        <text>ATP-dependent cleavage of peptide bonds with broad specificity.</text>
        <dbReference type="EC" id="3.4.25.2"/>
    </reaction>
</comment>
<comment type="activity regulation">
    <text evidence="1">Allosterically activated by HslU binding.</text>
</comment>
<comment type="subunit">
    <text evidence="1">A double ring-shaped homohexamer of HslV is capped on each side by a ring-shaped HslU homohexamer. The assembly of the HslU/HslV complex is dependent on binding of ATP.</text>
</comment>
<comment type="subcellular location">
    <subcellularLocation>
        <location evidence="1">Cytoplasm</location>
    </subcellularLocation>
</comment>
<comment type="similarity">
    <text evidence="1">Belongs to the peptidase T1B family. HslV subfamily.</text>
</comment>
<name>HSLV_WOLWR</name>
<protein>
    <recommendedName>
        <fullName evidence="1">ATP-dependent protease subunit HslV</fullName>
        <ecNumber evidence="1">3.4.25.2</ecNumber>
    </recommendedName>
</protein>
<reference key="1">
    <citation type="journal article" date="2009" name="Proc. Natl. Acad. Sci. U.S.A.">
        <title>The mosaic genome structure of the Wolbachia wRi strain infecting Drosophila simulans.</title>
        <authorList>
            <person name="Klasson L."/>
            <person name="Westberg J."/>
            <person name="Sapountzis P."/>
            <person name="Naeslund K."/>
            <person name="Lutnaes Y."/>
            <person name="Darby A.C."/>
            <person name="Veneti Z."/>
            <person name="Chen L."/>
            <person name="Braig H.R."/>
            <person name="Garrett R."/>
            <person name="Bourtzis K."/>
            <person name="Andersson S.G."/>
        </authorList>
    </citation>
    <scope>NUCLEOTIDE SEQUENCE [LARGE SCALE GENOMIC DNA]</scope>
    <source>
        <strain>wRi</strain>
    </source>
</reference>
<proteinExistence type="inferred from homology"/>
<dbReference type="EC" id="3.4.25.2" evidence="1"/>
<dbReference type="EMBL" id="CP001391">
    <property type="protein sequence ID" value="ACN95855.1"/>
    <property type="molecule type" value="Genomic_DNA"/>
</dbReference>
<dbReference type="RefSeq" id="WP_006280198.1">
    <property type="nucleotide sequence ID" value="NZ_MKIF01000092.1"/>
</dbReference>
<dbReference type="SMR" id="C0R4L3"/>
<dbReference type="STRING" id="66084.WRi_011610"/>
<dbReference type="MEROPS" id="T01.006"/>
<dbReference type="GeneID" id="70036656"/>
<dbReference type="KEGG" id="wri:WRi_011610"/>
<dbReference type="HOGENOM" id="CLU_093872_1_0_5"/>
<dbReference type="Proteomes" id="UP000001293">
    <property type="component" value="Chromosome"/>
</dbReference>
<dbReference type="GO" id="GO:0009376">
    <property type="term" value="C:HslUV protease complex"/>
    <property type="evidence" value="ECO:0007669"/>
    <property type="project" value="UniProtKB-UniRule"/>
</dbReference>
<dbReference type="GO" id="GO:0005839">
    <property type="term" value="C:proteasome core complex"/>
    <property type="evidence" value="ECO:0007669"/>
    <property type="project" value="InterPro"/>
</dbReference>
<dbReference type="GO" id="GO:0046872">
    <property type="term" value="F:metal ion binding"/>
    <property type="evidence" value="ECO:0007669"/>
    <property type="project" value="UniProtKB-KW"/>
</dbReference>
<dbReference type="GO" id="GO:0004298">
    <property type="term" value="F:threonine-type endopeptidase activity"/>
    <property type="evidence" value="ECO:0007669"/>
    <property type="project" value="UniProtKB-KW"/>
</dbReference>
<dbReference type="GO" id="GO:0051603">
    <property type="term" value="P:proteolysis involved in protein catabolic process"/>
    <property type="evidence" value="ECO:0007669"/>
    <property type="project" value="InterPro"/>
</dbReference>
<dbReference type="CDD" id="cd01913">
    <property type="entry name" value="protease_HslV"/>
    <property type="match status" value="1"/>
</dbReference>
<dbReference type="FunFam" id="3.60.20.10:FF:000002">
    <property type="entry name" value="ATP-dependent protease subunit HslV"/>
    <property type="match status" value="1"/>
</dbReference>
<dbReference type="Gene3D" id="3.60.20.10">
    <property type="entry name" value="Glutamine Phosphoribosylpyrophosphate, subunit 1, domain 1"/>
    <property type="match status" value="1"/>
</dbReference>
<dbReference type="HAMAP" id="MF_00248">
    <property type="entry name" value="HslV"/>
    <property type="match status" value="1"/>
</dbReference>
<dbReference type="InterPro" id="IPR022281">
    <property type="entry name" value="ATP-dep_Prtase_HsIV_su"/>
</dbReference>
<dbReference type="InterPro" id="IPR029055">
    <property type="entry name" value="Ntn_hydrolases_N"/>
</dbReference>
<dbReference type="InterPro" id="IPR001353">
    <property type="entry name" value="Proteasome_sua/b"/>
</dbReference>
<dbReference type="InterPro" id="IPR023333">
    <property type="entry name" value="Proteasome_suB-type"/>
</dbReference>
<dbReference type="NCBIfam" id="TIGR03692">
    <property type="entry name" value="ATP_dep_HslV"/>
    <property type="match status" value="1"/>
</dbReference>
<dbReference type="NCBIfam" id="NF003964">
    <property type="entry name" value="PRK05456.1"/>
    <property type="match status" value="1"/>
</dbReference>
<dbReference type="PANTHER" id="PTHR32194:SF7">
    <property type="entry name" value="ATP-DEPENDENT PROTEASE SUBUNIT HSLV"/>
    <property type="match status" value="1"/>
</dbReference>
<dbReference type="PANTHER" id="PTHR32194">
    <property type="entry name" value="METALLOPROTEASE TLDD"/>
    <property type="match status" value="1"/>
</dbReference>
<dbReference type="Pfam" id="PF00227">
    <property type="entry name" value="Proteasome"/>
    <property type="match status" value="1"/>
</dbReference>
<dbReference type="PIRSF" id="PIRSF039093">
    <property type="entry name" value="HslV"/>
    <property type="match status" value="1"/>
</dbReference>
<dbReference type="SUPFAM" id="SSF56235">
    <property type="entry name" value="N-terminal nucleophile aminohydrolases (Ntn hydrolases)"/>
    <property type="match status" value="1"/>
</dbReference>
<dbReference type="PROSITE" id="PS51476">
    <property type="entry name" value="PROTEASOME_BETA_2"/>
    <property type="match status" value="1"/>
</dbReference>
<keyword id="KW-0021">Allosteric enzyme</keyword>
<keyword id="KW-0963">Cytoplasm</keyword>
<keyword id="KW-0378">Hydrolase</keyword>
<keyword id="KW-0479">Metal-binding</keyword>
<keyword id="KW-0645">Protease</keyword>
<keyword id="KW-0915">Sodium</keyword>
<keyword id="KW-0888">Threonine protease</keyword>
<organism>
    <name type="scientific">Wolbachia sp. subsp. Drosophila simulans (strain wRi)</name>
    <dbReference type="NCBI Taxonomy" id="66084"/>
    <lineage>
        <taxon>Bacteria</taxon>
        <taxon>Pseudomonadati</taxon>
        <taxon>Pseudomonadota</taxon>
        <taxon>Alphaproteobacteria</taxon>
        <taxon>Rickettsiales</taxon>
        <taxon>Anaplasmataceae</taxon>
        <taxon>Wolbachieae</taxon>
        <taxon>Wolbachia</taxon>
    </lineage>
</organism>
<accession>C0R4L3</accession>
<sequence length="184" mass="19845">MIQHDNNKMYGTTILSIRKDKSVVVIGDGQVSLGHTVIKSGAKKVRRLSGDSVIAGFAGATADAFTLFERLESKLDKHPGQLMRACVELAKDWRMDKYLRKLEAMMIVADKSISLVITGTGDVLEPEDGVAAIGSGGNFALSAARALIDIKGISIEEIAKKAMKIAGDICVYTNHNVVIEKIEE</sequence>